<dbReference type="EMBL" id="CP000749">
    <property type="protein sequence ID" value="ABR73356.1"/>
    <property type="molecule type" value="Genomic_DNA"/>
</dbReference>
<dbReference type="SMR" id="A6W3S7"/>
<dbReference type="STRING" id="400668.Mmwyl1_4461"/>
<dbReference type="KEGG" id="mmw:Mmwyl1_4461"/>
<dbReference type="eggNOG" id="COG0355">
    <property type="taxonomic scope" value="Bacteria"/>
</dbReference>
<dbReference type="HOGENOM" id="CLU_084338_2_0_6"/>
<dbReference type="OrthoDB" id="9791445at2"/>
<dbReference type="GO" id="GO:0005886">
    <property type="term" value="C:plasma membrane"/>
    <property type="evidence" value="ECO:0007669"/>
    <property type="project" value="UniProtKB-SubCell"/>
</dbReference>
<dbReference type="GO" id="GO:0045259">
    <property type="term" value="C:proton-transporting ATP synthase complex"/>
    <property type="evidence" value="ECO:0007669"/>
    <property type="project" value="UniProtKB-KW"/>
</dbReference>
<dbReference type="GO" id="GO:0005524">
    <property type="term" value="F:ATP binding"/>
    <property type="evidence" value="ECO:0007669"/>
    <property type="project" value="UniProtKB-UniRule"/>
</dbReference>
<dbReference type="GO" id="GO:0046933">
    <property type="term" value="F:proton-transporting ATP synthase activity, rotational mechanism"/>
    <property type="evidence" value="ECO:0007669"/>
    <property type="project" value="UniProtKB-UniRule"/>
</dbReference>
<dbReference type="CDD" id="cd12152">
    <property type="entry name" value="F1-ATPase_delta"/>
    <property type="match status" value="1"/>
</dbReference>
<dbReference type="FunFam" id="2.60.15.10:FF:000001">
    <property type="entry name" value="ATP synthase epsilon chain"/>
    <property type="match status" value="1"/>
</dbReference>
<dbReference type="Gene3D" id="1.20.5.440">
    <property type="entry name" value="ATP synthase delta/epsilon subunit, C-terminal domain"/>
    <property type="match status" value="1"/>
</dbReference>
<dbReference type="Gene3D" id="2.60.15.10">
    <property type="entry name" value="F0F1 ATP synthase delta/epsilon subunit, N-terminal"/>
    <property type="match status" value="1"/>
</dbReference>
<dbReference type="HAMAP" id="MF_00530">
    <property type="entry name" value="ATP_synth_epsil_bac"/>
    <property type="match status" value="1"/>
</dbReference>
<dbReference type="InterPro" id="IPR036794">
    <property type="entry name" value="ATP_F1_dsu/esu_C_sf"/>
</dbReference>
<dbReference type="InterPro" id="IPR001469">
    <property type="entry name" value="ATP_synth_F1_dsu/esu"/>
</dbReference>
<dbReference type="InterPro" id="IPR020546">
    <property type="entry name" value="ATP_synth_F1_dsu/esu_N"/>
</dbReference>
<dbReference type="InterPro" id="IPR020547">
    <property type="entry name" value="ATP_synth_F1_esu_C"/>
</dbReference>
<dbReference type="InterPro" id="IPR036771">
    <property type="entry name" value="ATPsynth_dsu/esu_N"/>
</dbReference>
<dbReference type="NCBIfam" id="TIGR01216">
    <property type="entry name" value="ATP_synt_epsi"/>
    <property type="match status" value="1"/>
</dbReference>
<dbReference type="NCBIfam" id="NF001847">
    <property type="entry name" value="PRK00571.1-4"/>
    <property type="match status" value="1"/>
</dbReference>
<dbReference type="NCBIfam" id="NF009977">
    <property type="entry name" value="PRK13442.1"/>
    <property type="match status" value="1"/>
</dbReference>
<dbReference type="PANTHER" id="PTHR13822">
    <property type="entry name" value="ATP SYNTHASE DELTA/EPSILON CHAIN"/>
    <property type="match status" value="1"/>
</dbReference>
<dbReference type="PANTHER" id="PTHR13822:SF10">
    <property type="entry name" value="ATP SYNTHASE EPSILON CHAIN, CHLOROPLASTIC"/>
    <property type="match status" value="1"/>
</dbReference>
<dbReference type="Pfam" id="PF00401">
    <property type="entry name" value="ATP-synt_DE"/>
    <property type="match status" value="1"/>
</dbReference>
<dbReference type="Pfam" id="PF02823">
    <property type="entry name" value="ATP-synt_DE_N"/>
    <property type="match status" value="1"/>
</dbReference>
<dbReference type="SUPFAM" id="SSF46604">
    <property type="entry name" value="Epsilon subunit of F1F0-ATP synthase C-terminal domain"/>
    <property type="match status" value="1"/>
</dbReference>
<dbReference type="SUPFAM" id="SSF51344">
    <property type="entry name" value="Epsilon subunit of F1F0-ATP synthase N-terminal domain"/>
    <property type="match status" value="1"/>
</dbReference>
<feature type="chain" id="PRO_1000081736" description="ATP synthase epsilon chain">
    <location>
        <begin position="1"/>
        <end position="139"/>
    </location>
</feature>
<reference key="1">
    <citation type="submission" date="2007-06" db="EMBL/GenBank/DDBJ databases">
        <title>Complete sequence of Marinomonas sp. MWYL1.</title>
        <authorList>
            <consortium name="US DOE Joint Genome Institute"/>
            <person name="Copeland A."/>
            <person name="Lucas S."/>
            <person name="Lapidus A."/>
            <person name="Barry K."/>
            <person name="Glavina del Rio T."/>
            <person name="Dalin E."/>
            <person name="Tice H."/>
            <person name="Pitluck S."/>
            <person name="Kiss H."/>
            <person name="Brettin T."/>
            <person name="Bruce D."/>
            <person name="Detter J.C."/>
            <person name="Han C."/>
            <person name="Schmutz J."/>
            <person name="Larimer F."/>
            <person name="Land M."/>
            <person name="Hauser L."/>
            <person name="Kyrpides N."/>
            <person name="Kim E."/>
            <person name="Johnston A.W.B."/>
            <person name="Todd J.D."/>
            <person name="Rogers R."/>
            <person name="Wexler M."/>
            <person name="Bond P.L."/>
            <person name="Li Y."/>
            <person name="Richardson P."/>
        </authorList>
    </citation>
    <scope>NUCLEOTIDE SEQUENCE [LARGE SCALE GENOMIC DNA]</scope>
    <source>
        <strain>MWYL1</strain>
    </source>
</reference>
<gene>
    <name evidence="1" type="primary">atpC</name>
    <name type="ordered locus">Mmwyl1_4461</name>
</gene>
<sequence length="139" mass="15082">MAITVHCDIVSAEQEIFSGTVQSLVAAGSYGDLGIMPGHAPLLTTLQAGPVRVVKENGDEEVIFVSGGFLEVQPHRVTVLANTATRARDLDEEAALKAQEHAKELLANQKPDVDYTRATAELVEAMARLRTIQQFRNNK</sequence>
<protein>
    <recommendedName>
        <fullName evidence="1">ATP synthase epsilon chain</fullName>
    </recommendedName>
    <alternativeName>
        <fullName evidence="1">ATP synthase F1 sector epsilon subunit</fullName>
    </alternativeName>
    <alternativeName>
        <fullName evidence="1">F-ATPase epsilon subunit</fullName>
    </alternativeName>
</protein>
<organism>
    <name type="scientific">Marinomonas sp. (strain MWYL1)</name>
    <dbReference type="NCBI Taxonomy" id="400668"/>
    <lineage>
        <taxon>Bacteria</taxon>
        <taxon>Pseudomonadati</taxon>
        <taxon>Pseudomonadota</taxon>
        <taxon>Gammaproteobacteria</taxon>
        <taxon>Oceanospirillales</taxon>
        <taxon>Oceanospirillaceae</taxon>
        <taxon>Marinomonas</taxon>
    </lineage>
</organism>
<evidence type="ECO:0000255" key="1">
    <source>
        <dbReference type="HAMAP-Rule" id="MF_00530"/>
    </source>
</evidence>
<name>ATPE_MARMS</name>
<keyword id="KW-0066">ATP synthesis</keyword>
<keyword id="KW-0997">Cell inner membrane</keyword>
<keyword id="KW-1003">Cell membrane</keyword>
<keyword id="KW-0139">CF(1)</keyword>
<keyword id="KW-0375">Hydrogen ion transport</keyword>
<keyword id="KW-0406">Ion transport</keyword>
<keyword id="KW-0472">Membrane</keyword>
<keyword id="KW-0813">Transport</keyword>
<comment type="function">
    <text evidence="1">Produces ATP from ADP in the presence of a proton gradient across the membrane.</text>
</comment>
<comment type="subunit">
    <text evidence="1">F-type ATPases have 2 components, CF(1) - the catalytic core - and CF(0) - the membrane proton channel. CF(1) has five subunits: alpha(3), beta(3), gamma(1), delta(1), epsilon(1). CF(0) has three main subunits: a, b and c.</text>
</comment>
<comment type="subcellular location">
    <subcellularLocation>
        <location evidence="1">Cell inner membrane</location>
        <topology evidence="1">Peripheral membrane protein</topology>
    </subcellularLocation>
</comment>
<comment type="similarity">
    <text evidence="1">Belongs to the ATPase epsilon chain family.</text>
</comment>
<accession>A6W3S7</accession>
<proteinExistence type="inferred from homology"/>